<sequence>MLKKFFLPDEFVKNIFHITPEKLKERNVKGIITDLDNTLVEWDRPNATPRLIEWFEEMKEHGIKVTIVSNNNERRVKLFSEPLGIPFIYKARKPMGKAFNRAVRNMELKKEDCVVIGDQLLTDVLGGNRNGYHTILVVPVASSDGFITRFNRQVERRILSALKRKGHIQWEE</sequence>
<evidence type="ECO:0000269" key="1">
    <source>
    </source>
</evidence>
<evidence type="ECO:0000305" key="2">
    <source>
    </source>
</evidence>
<reference key="1">
    <citation type="journal article" date="1996" name="Microbiology">
        <title>Systematic sequencing of the 283 kb 210 degrees-232 degrees region of the Bacillus subtilis genome containing the skin element and many sporulation genes.</title>
        <authorList>
            <person name="Mizuno M."/>
            <person name="Masuda S."/>
            <person name="Takemaru K."/>
            <person name="Hosono S."/>
            <person name="Sato T."/>
            <person name="Takeuchi M."/>
            <person name="Kobayashi Y."/>
        </authorList>
    </citation>
    <scope>NUCLEOTIDE SEQUENCE [GENOMIC DNA]</scope>
    <source>
        <strain>168 / JH642</strain>
    </source>
</reference>
<reference key="2">
    <citation type="journal article" date="1997" name="Nature">
        <title>The complete genome sequence of the Gram-positive bacterium Bacillus subtilis.</title>
        <authorList>
            <person name="Kunst F."/>
            <person name="Ogasawara N."/>
            <person name="Moszer I."/>
            <person name="Albertini A.M."/>
            <person name="Alloni G."/>
            <person name="Azevedo V."/>
            <person name="Bertero M.G."/>
            <person name="Bessieres P."/>
            <person name="Bolotin A."/>
            <person name="Borchert S."/>
            <person name="Borriss R."/>
            <person name="Boursier L."/>
            <person name="Brans A."/>
            <person name="Braun M."/>
            <person name="Brignell S.C."/>
            <person name="Bron S."/>
            <person name="Brouillet S."/>
            <person name="Bruschi C.V."/>
            <person name="Caldwell B."/>
            <person name="Capuano V."/>
            <person name="Carter N.M."/>
            <person name="Choi S.-K."/>
            <person name="Codani J.-J."/>
            <person name="Connerton I.F."/>
            <person name="Cummings N.J."/>
            <person name="Daniel R.A."/>
            <person name="Denizot F."/>
            <person name="Devine K.M."/>
            <person name="Duesterhoeft A."/>
            <person name="Ehrlich S.D."/>
            <person name="Emmerson P.T."/>
            <person name="Entian K.-D."/>
            <person name="Errington J."/>
            <person name="Fabret C."/>
            <person name="Ferrari E."/>
            <person name="Foulger D."/>
            <person name="Fritz C."/>
            <person name="Fujita M."/>
            <person name="Fujita Y."/>
            <person name="Fuma S."/>
            <person name="Galizzi A."/>
            <person name="Galleron N."/>
            <person name="Ghim S.-Y."/>
            <person name="Glaser P."/>
            <person name="Goffeau A."/>
            <person name="Golightly E.J."/>
            <person name="Grandi G."/>
            <person name="Guiseppi G."/>
            <person name="Guy B.J."/>
            <person name="Haga K."/>
            <person name="Haiech J."/>
            <person name="Harwood C.R."/>
            <person name="Henaut A."/>
            <person name="Hilbert H."/>
            <person name="Holsappel S."/>
            <person name="Hosono S."/>
            <person name="Hullo M.-F."/>
            <person name="Itaya M."/>
            <person name="Jones L.-M."/>
            <person name="Joris B."/>
            <person name="Karamata D."/>
            <person name="Kasahara Y."/>
            <person name="Klaerr-Blanchard M."/>
            <person name="Klein C."/>
            <person name="Kobayashi Y."/>
            <person name="Koetter P."/>
            <person name="Koningstein G."/>
            <person name="Krogh S."/>
            <person name="Kumano M."/>
            <person name="Kurita K."/>
            <person name="Lapidus A."/>
            <person name="Lardinois S."/>
            <person name="Lauber J."/>
            <person name="Lazarevic V."/>
            <person name="Lee S.-M."/>
            <person name="Levine A."/>
            <person name="Liu H."/>
            <person name="Masuda S."/>
            <person name="Mauel C."/>
            <person name="Medigue C."/>
            <person name="Medina N."/>
            <person name="Mellado R.P."/>
            <person name="Mizuno M."/>
            <person name="Moestl D."/>
            <person name="Nakai S."/>
            <person name="Noback M."/>
            <person name="Noone D."/>
            <person name="O'Reilly M."/>
            <person name="Ogawa K."/>
            <person name="Ogiwara A."/>
            <person name="Oudega B."/>
            <person name="Park S.-H."/>
            <person name="Parro V."/>
            <person name="Pohl T.M."/>
            <person name="Portetelle D."/>
            <person name="Porwollik S."/>
            <person name="Prescott A.M."/>
            <person name="Presecan E."/>
            <person name="Pujic P."/>
            <person name="Purnelle B."/>
            <person name="Rapoport G."/>
            <person name="Rey M."/>
            <person name="Reynolds S."/>
            <person name="Rieger M."/>
            <person name="Rivolta C."/>
            <person name="Rocha E."/>
            <person name="Roche B."/>
            <person name="Rose M."/>
            <person name="Sadaie Y."/>
            <person name="Sato T."/>
            <person name="Scanlan E."/>
            <person name="Schleich S."/>
            <person name="Schroeter R."/>
            <person name="Scoffone F."/>
            <person name="Sekiguchi J."/>
            <person name="Sekowska A."/>
            <person name="Seror S.J."/>
            <person name="Serror P."/>
            <person name="Shin B.-S."/>
            <person name="Soldo B."/>
            <person name="Sorokin A."/>
            <person name="Tacconi E."/>
            <person name="Takagi T."/>
            <person name="Takahashi H."/>
            <person name="Takemaru K."/>
            <person name="Takeuchi M."/>
            <person name="Tamakoshi A."/>
            <person name="Tanaka T."/>
            <person name="Terpstra P."/>
            <person name="Tognoni A."/>
            <person name="Tosato V."/>
            <person name="Uchiyama S."/>
            <person name="Vandenbol M."/>
            <person name="Vannier F."/>
            <person name="Vassarotti A."/>
            <person name="Viari A."/>
            <person name="Wambutt R."/>
            <person name="Wedler E."/>
            <person name="Wedler H."/>
            <person name="Weitzenegger T."/>
            <person name="Winters P."/>
            <person name="Wipat A."/>
            <person name="Yamamoto H."/>
            <person name="Yamane K."/>
            <person name="Yasumoto K."/>
            <person name="Yata K."/>
            <person name="Yoshida K."/>
            <person name="Yoshikawa H.-F."/>
            <person name="Zumstein E."/>
            <person name="Yoshikawa H."/>
            <person name="Danchin A."/>
        </authorList>
    </citation>
    <scope>NUCLEOTIDE SEQUENCE [LARGE SCALE GENOMIC DNA]</scope>
    <source>
        <strain>168</strain>
    </source>
</reference>
<reference key="3">
    <citation type="journal article" date="2016" name="BMC Microbiol.">
        <title>Bacillus subtilis 5'-nucleotidases with various functions and substrate specificities.</title>
        <authorList>
            <person name="Terakawa A."/>
            <person name="Natsume A."/>
            <person name="Okada A."/>
            <person name="Nishihata S."/>
            <person name="Kuse J."/>
            <person name="Tanaka K."/>
            <person name="Takenaka S."/>
            <person name="Ishikawa S."/>
            <person name="Yoshida K.I."/>
        </authorList>
    </citation>
    <scope>FUNCTION</scope>
    <scope>DISRUPTION PHENOTYPE</scope>
    <source>
        <strain>168</strain>
    </source>
</reference>
<organism>
    <name type="scientific">Bacillus subtilis (strain 168)</name>
    <dbReference type="NCBI Taxonomy" id="224308"/>
    <lineage>
        <taxon>Bacteria</taxon>
        <taxon>Bacillati</taxon>
        <taxon>Bacillota</taxon>
        <taxon>Bacilli</taxon>
        <taxon>Bacillales</taxon>
        <taxon>Bacillaceae</taxon>
        <taxon>Bacillus</taxon>
    </lineage>
</organism>
<dbReference type="EC" id="3.1.3.-" evidence="2"/>
<dbReference type="EMBL" id="D84432">
    <property type="protein sequence ID" value="BAA12443.1"/>
    <property type="molecule type" value="Genomic_DNA"/>
</dbReference>
<dbReference type="EMBL" id="AL009126">
    <property type="protein sequence ID" value="CAB14510.1"/>
    <property type="molecule type" value="Genomic_DNA"/>
</dbReference>
<dbReference type="PIR" id="C69951">
    <property type="entry name" value="C69951"/>
</dbReference>
<dbReference type="RefSeq" id="NP_390446.1">
    <property type="nucleotide sequence ID" value="NC_000964.3"/>
</dbReference>
<dbReference type="RefSeq" id="WP_003226126.1">
    <property type="nucleotide sequence ID" value="NZ_OZ025638.1"/>
</dbReference>
<dbReference type="SMR" id="P54452"/>
<dbReference type="FunCoup" id="P54452">
    <property type="interactions" value="166"/>
</dbReference>
<dbReference type="STRING" id="224308.BSU25680"/>
<dbReference type="jPOST" id="P54452"/>
<dbReference type="PaxDb" id="224308-BSU25680"/>
<dbReference type="DNASU" id="937815"/>
<dbReference type="EnsemblBacteria" id="CAB14510">
    <property type="protein sequence ID" value="CAB14510"/>
    <property type="gene ID" value="BSU_25680"/>
</dbReference>
<dbReference type="GeneID" id="937815"/>
<dbReference type="KEGG" id="bsu:BSU25680"/>
<dbReference type="PATRIC" id="fig|224308.179.peg.2791"/>
<dbReference type="eggNOG" id="COG2179">
    <property type="taxonomic scope" value="Bacteria"/>
</dbReference>
<dbReference type="InParanoid" id="P54452"/>
<dbReference type="OrthoDB" id="9787572at2"/>
<dbReference type="PhylomeDB" id="P54452"/>
<dbReference type="BioCyc" id="BSUB:BSU25680-MONOMER"/>
<dbReference type="PRO" id="PR:P54452"/>
<dbReference type="Proteomes" id="UP000001570">
    <property type="component" value="Chromosome"/>
</dbReference>
<dbReference type="GO" id="GO:0005737">
    <property type="term" value="C:cytoplasm"/>
    <property type="evidence" value="ECO:0000318"/>
    <property type="project" value="GO_Central"/>
</dbReference>
<dbReference type="GO" id="GO:0016791">
    <property type="term" value="F:phosphatase activity"/>
    <property type="evidence" value="ECO:0000318"/>
    <property type="project" value="GO_Central"/>
</dbReference>
<dbReference type="GO" id="GO:0008962">
    <property type="term" value="F:phosphatidylglycerophosphatase activity"/>
    <property type="evidence" value="ECO:0007669"/>
    <property type="project" value="InterPro"/>
</dbReference>
<dbReference type="CDD" id="cd16416">
    <property type="entry name" value="HAD_BsYqeG-like"/>
    <property type="match status" value="1"/>
</dbReference>
<dbReference type="FunFam" id="3.40.50.1000:FF:000067">
    <property type="entry name" value="HAD phosphatase, family IIIA"/>
    <property type="match status" value="1"/>
</dbReference>
<dbReference type="Gene3D" id="3.40.50.1000">
    <property type="entry name" value="HAD superfamily/HAD-like"/>
    <property type="match status" value="1"/>
</dbReference>
<dbReference type="InterPro" id="IPR036412">
    <property type="entry name" value="HAD-like_sf"/>
</dbReference>
<dbReference type="InterPro" id="IPR006439">
    <property type="entry name" value="HAD-SF_hydro_IA"/>
</dbReference>
<dbReference type="InterPro" id="IPR006549">
    <property type="entry name" value="HAD-SF_hydro_IIIA"/>
</dbReference>
<dbReference type="InterPro" id="IPR023214">
    <property type="entry name" value="HAD_sf"/>
</dbReference>
<dbReference type="InterPro" id="IPR010021">
    <property type="entry name" value="PGPP1/Gep4"/>
</dbReference>
<dbReference type="NCBIfam" id="TIGR01549">
    <property type="entry name" value="HAD-SF-IA-v1"/>
    <property type="match status" value="1"/>
</dbReference>
<dbReference type="NCBIfam" id="TIGR01662">
    <property type="entry name" value="HAD-SF-IIIA"/>
    <property type="match status" value="1"/>
</dbReference>
<dbReference type="NCBIfam" id="TIGR01668">
    <property type="entry name" value="YqeG_hyp_ppase"/>
    <property type="match status" value="1"/>
</dbReference>
<dbReference type="PANTHER" id="PTHR19288">
    <property type="entry name" value="4-NITROPHENYLPHOSPHATASE-RELATED"/>
    <property type="match status" value="1"/>
</dbReference>
<dbReference type="PANTHER" id="PTHR19288:SF25">
    <property type="entry name" value="PHOSPHATIDYLGLYCEROPHOSPHATASE GEP4, MITOCHONDRIAL"/>
    <property type="match status" value="1"/>
</dbReference>
<dbReference type="Pfam" id="PF08282">
    <property type="entry name" value="Hydrolase_3"/>
    <property type="match status" value="1"/>
</dbReference>
<dbReference type="Pfam" id="PF13242">
    <property type="entry name" value="Hydrolase_like"/>
    <property type="match status" value="1"/>
</dbReference>
<dbReference type="SUPFAM" id="SSF56784">
    <property type="entry name" value="HAD-like"/>
    <property type="match status" value="1"/>
</dbReference>
<protein>
    <recommendedName>
        <fullName>Probable phosphatase YqeG</fullName>
        <ecNumber evidence="2">3.1.3.-</ecNumber>
    </recommendedName>
</protein>
<feature type="chain" id="PRO_0000049784" description="Probable phosphatase YqeG">
    <location>
        <begin position="1"/>
        <end position="172"/>
    </location>
</feature>
<name>YQEG_BACSU</name>
<keyword id="KW-0378">Hydrolase</keyword>
<keyword id="KW-1185">Reference proteome</keyword>
<comment type="function">
    <text evidence="1">Has low dephosphorylation activity on GMP and glucose-6-phosphate.</text>
</comment>
<comment type="disruption phenotype">
    <text evidence="1">Required for growth on solid medium.</text>
</comment>
<accession>P54452</accession>
<proteinExistence type="predicted"/>
<gene>
    <name type="primary">yqeG</name>
    <name type="ordered locus">BSU25680</name>
</gene>